<reference key="1">
    <citation type="submission" date="2005-10" db="EMBL/GenBank/DDBJ databases">
        <title>Complete sequence of Pelobacter carbinolicus DSM 2380.</title>
        <authorList>
            <person name="Copeland A."/>
            <person name="Lucas S."/>
            <person name="Lapidus A."/>
            <person name="Barry K."/>
            <person name="Detter J.C."/>
            <person name="Glavina T."/>
            <person name="Hammon N."/>
            <person name="Israni S."/>
            <person name="Pitluck S."/>
            <person name="Chertkov O."/>
            <person name="Schmutz J."/>
            <person name="Larimer F."/>
            <person name="Land M."/>
            <person name="Kyrpides N."/>
            <person name="Ivanova N."/>
            <person name="Richardson P."/>
        </authorList>
    </citation>
    <scope>NUCLEOTIDE SEQUENCE [LARGE SCALE GENOMIC DNA]</scope>
    <source>
        <strain>DSM 2380 / NBRC 103641 / GraBd1</strain>
    </source>
</reference>
<accession>Q3A090</accession>
<comment type="function">
    <text evidence="1">Catalyzes the ATP-dependent conversion of 7-carboxy-7-deazaguanine (CDG) to 7-cyano-7-deazaguanine (preQ(0)).</text>
</comment>
<comment type="catalytic activity">
    <reaction evidence="1">
        <text>7-carboxy-7-deazaguanine + NH4(+) + ATP = 7-cyano-7-deazaguanine + ADP + phosphate + H2O + H(+)</text>
        <dbReference type="Rhea" id="RHEA:27982"/>
        <dbReference type="ChEBI" id="CHEBI:15377"/>
        <dbReference type="ChEBI" id="CHEBI:15378"/>
        <dbReference type="ChEBI" id="CHEBI:28938"/>
        <dbReference type="ChEBI" id="CHEBI:30616"/>
        <dbReference type="ChEBI" id="CHEBI:43474"/>
        <dbReference type="ChEBI" id="CHEBI:45075"/>
        <dbReference type="ChEBI" id="CHEBI:61036"/>
        <dbReference type="ChEBI" id="CHEBI:456216"/>
        <dbReference type="EC" id="6.3.4.20"/>
    </reaction>
</comment>
<comment type="cofactor">
    <cofactor evidence="1">
        <name>Zn(2+)</name>
        <dbReference type="ChEBI" id="CHEBI:29105"/>
    </cofactor>
    <text evidence="1">Binds 1 zinc ion per subunit.</text>
</comment>
<comment type="pathway">
    <text evidence="1">Purine metabolism; 7-cyano-7-deazaguanine biosynthesis.</text>
</comment>
<comment type="similarity">
    <text evidence="1">Belongs to the QueC family.</text>
</comment>
<proteinExistence type="inferred from homology"/>
<dbReference type="EC" id="6.3.4.20" evidence="1"/>
<dbReference type="EMBL" id="CP000142">
    <property type="protein sequence ID" value="ABA90217.1"/>
    <property type="molecule type" value="Genomic_DNA"/>
</dbReference>
<dbReference type="RefSeq" id="WP_011342769.1">
    <property type="nucleotide sequence ID" value="NC_007498.2"/>
</dbReference>
<dbReference type="SMR" id="Q3A090"/>
<dbReference type="STRING" id="338963.Pcar_2982"/>
<dbReference type="KEGG" id="pca:Pcar_2982"/>
<dbReference type="eggNOG" id="COG0603">
    <property type="taxonomic scope" value="Bacteria"/>
</dbReference>
<dbReference type="HOGENOM" id="CLU_081854_1_1_7"/>
<dbReference type="OrthoDB" id="9789567at2"/>
<dbReference type="UniPathway" id="UPA00391"/>
<dbReference type="Proteomes" id="UP000002534">
    <property type="component" value="Chromosome"/>
</dbReference>
<dbReference type="GO" id="GO:0005524">
    <property type="term" value="F:ATP binding"/>
    <property type="evidence" value="ECO:0007669"/>
    <property type="project" value="UniProtKB-UniRule"/>
</dbReference>
<dbReference type="GO" id="GO:0016879">
    <property type="term" value="F:ligase activity, forming carbon-nitrogen bonds"/>
    <property type="evidence" value="ECO:0007669"/>
    <property type="project" value="UniProtKB-UniRule"/>
</dbReference>
<dbReference type="GO" id="GO:0008270">
    <property type="term" value="F:zinc ion binding"/>
    <property type="evidence" value="ECO:0007669"/>
    <property type="project" value="UniProtKB-UniRule"/>
</dbReference>
<dbReference type="GO" id="GO:0008616">
    <property type="term" value="P:queuosine biosynthetic process"/>
    <property type="evidence" value="ECO:0007669"/>
    <property type="project" value="UniProtKB-UniRule"/>
</dbReference>
<dbReference type="CDD" id="cd01995">
    <property type="entry name" value="QueC-like"/>
    <property type="match status" value="1"/>
</dbReference>
<dbReference type="Gene3D" id="3.40.50.620">
    <property type="entry name" value="HUPs"/>
    <property type="match status" value="1"/>
</dbReference>
<dbReference type="HAMAP" id="MF_01633">
    <property type="entry name" value="QueC"/>
    <property type="match status" value="1"/>
</dbReference>
<dbReference type="InterPro" id="IPR018317">
    <property type="entry name" value="QueC"/>
</dbReference>
<dbReference type="InterPro" id="IPR014729">
    <property type="entry name" value="Rossmann-like_a/b/a_fold"/>
</dbReference>
<dbReference type="NCBIfam" id="TIGR00364">
    <property type="entry name" value="7-cyano-7-deazaguanine synthase QueC"/>
    <property type="match status" value="1"/>
</dbReference>
<dbReference type="PANTHER" id="PTHR42914">
    <property type="entry name" value="7-CYANO-7-DEAZAGUANINE SYNTHASE"/>
    <property type="match status" value="1"/>
</dbReference>
<dbReference type="PANTHER" id="PTHR42914:SF1">
    <property type="entry name" value="7-CYANO-7-DEAZAGUANINE SYNTHASE"/>
    <property type="match status" value="1"/>
</dbReference>
<dbReference type="Pfam" id="PF06508">
    <property type="entry name" value="QueC"/>
    <property type="match status" value="1"/>
</dbReference>
<dbReference type="PIRSF" id="PIRSF006293">
    <property type="entry name" value="ExsB"/>
    <property type="match status" value="1"/>
</dbReference>
<dbReference type="SUPFAM" id="SSF52402">
    <property type="entry name" value="Adenine nucleotide alpha hydrolases-like"/>
    <property type="match status" value="1"/>
</dbReference>
<sequence length="230" mass="24953">MSKKAVVLYSGGLDSTTCLAEARAAGFTPYALSFHYGQRHTVELEKARLYAPQVGAADHMVIDFDLRRIGGSALTSDEEVPKGREIDDAIPVTYVPARNTIFLSFALGWAEVLGSFDIFIGVNALDYSGYPDCRPEFISAFEQLANLATKAGVEGQGQYRVHAPLLHLTKAQIIKRGLELGVDYSLTHSCYDPTPEGLACGLCDSCQLRLKGFAEAGISDPAAYAREVQR</sequence>
<organism>
    <name type="scientific">Syntrophotalea carbinolica (strain DSM 2380 / NBRC 103641 / GraBd1)</name>
    <name type="common">Pelobacter carbinolicus</name>
    <dbReference type="NCBI Taxonomy" id="338963"/>
    <lineage>
        <taxon>Bacteria</taxon>
        <taxon>Pseudomonadati</taxon>
        <taxon>Thermodesulfobacteriota</taxon>
        <taxon>Desulfuromonadia</taxon>
        <taxon>Desulfuromonadales</taxon>
        <taxon>Syntrophotaleaceae</taxon>
        <taxon>Syntrophotalea</taxon>
    </lineage>
</organism>
<keyword id="KW-0067">ATP-binding</keyword>
<keyword id="KW-0436">Ligase</keyword>
<keyword id="KW-0479">Metal-binding</keyword>
<keyword id="KW-0547">Nucleotide-binding</keyword>
<keyword id="KW-0671">Queuosine biosynthesis</keyword>
<keyword id="KW-1185">Reference proteome</keyword>
<keyword id="KW-0862">Zinc</keyword>
<gene>
    <name evidence="1" type="primary">queC</name>
    <name type="ordered locus">Pcar_2982</name>
</gene>
<name>QUEC_SYNC1</name>
<protein>
    <recommendedName>
        <fullName evidence="1">7-cyano-7-deazaguanine synthase</fullName>
        <ecNumber evidence="1">6.3.4.20</ecNumber>
    </recommendedName>
    <alternativeName>
        <fullName evidence="1">7-cyano-7-carbaguanine synthase</fullName>
    </alternativeName>
    <alternativeName>
        <fullName evidence="1">PreQ(0) synthase</fullName>
    </alternativeName>
    <alternativeName>
        <fullName evidence="1">Queuosine biosynthesis protein QueC</fullName>
    </alternativeName>
</protein>
<feature type="chain" id="PRO_0000246873" description="7-cyano-7-deazaguanine synthase">
    <location>
        <begin position="1"/>
        <end position="230"/>
    </location>
</feature>
<feature type="binding site" evidence="1">
    <location>
        <begin position="9"/>
        <end position="19"/>
    </location>
    <ligand>
        <name>ATP</name>
        <dbReference type="ChEBI" id="CHEBI:30616"/>
    </ligand>
</feature>
<feature type="binding site" evidence="1">
    <location>
        <position position="190"/>
    </location>
    <ligand>
        <name>Zn(2+)</name>
        <dbReference type="ChEBI" id="CHEBI:29105"/>
    </ligand>
</feature>
<feature type="binding site" evidence="1">
    <location>
        <position position="200"/>
    </location>
    <ligand>
        <name>Zn(2+)</name>
        <dbReference type="ChEBI" id="CHEBI:29105"/>
    </ligand>
</feature>
<feature type="binding site" evidence="1">
    <location>
        <position position="203"/>
    </location>
    <ligand>
        <name>Zn(2+)</name>
        <dbReference type="ChEBI" id="CHEBI:29105"/>
    </ligand>
</feature>
<feature type="binding site" evidence="1">
    <location>
        <position position="206"/>
    </location>
    <ligand>
        <name>Zn(2+)</name>
        <dbReference type="ChEBI" id="CHEBI:29105"/>
    </ligand>
</feature>
<evidence type="ECO:0000255" key="1">
    <source>
        <dbReference type="HAMAP-Rule" id="MF_01633"/>
    </source>
</evidence>